<sequence length="481" mass="51770">MQQNEKASLNTSAAAAKAGSYTGYADVYDFWYYHQRGDGLTVNGKPSYTTDKAVSEGLTRPHTTWNGDNVFGKAANLTYSFLNTFSSTPNGHTGPVKFTPVQMQQAKLSLQSWADAANLTFTEVSPNQKANITFANYTRNADGSLNTDTQAYAAYPGTHPVSGSAWFNYNQSSIRNPDTDEYGRHSFTHEIGHALGLSHPAEYNAGEGDISYKNSAAYAEDSRQFSIMSYWEVENTGGDFKGHYSAGPLMDDIAAIQKLYGANMTTRTGDTVYGFNSNTDRDFYTATNSSKALVFSVWDAGGTDTFDFSGYSNNQRINLNEGSFSDVGGLKGNVSIAHGVTIENAIGGSGNDILIGNGADNILQGGAGDDVLYGSTGADTLTGGAGRDIFVYGSGQDSTVSAYDWITDFQTGIDKIDLSAFRNEGQLSFVQDQFTGKGQEVMLQWDAANSTTNLWLHEAGHSSVDFLVRIVGQTAQSDIIV</sequence>
<comment type="catalytic activity">
    <reaction>
        <text>Preferential cleavage of bonds with hydrophobic residues in P1'.</text>
        <dbReference type="EC" id="3.4.24.40"/>
    </reaction>
</comment>
<comment type="cofactor">
    <cofactor evidence="1">
        <name>Ca(2+)</name>
        <dbReference type="ChEBI" id="CHEBI:29108"/>
    </cofactor>
    <text evidence="1">Binds 7 Ca(2+) ions per subunit.</text>
</comment>
<comment type="cofactor">
    <cofactor evidence="1">
        <name>Zn(2+)</name>
        <dbReference type="ChEBI" id="CHEBI:29105"/>
    </cofactor>
    <text evidence="1">Binds 1 zinc ion per subunit.</text>
</comment>
<comment type="subcellular location">
    <subcellularLocation>
        <location>Secreted</location>
    </subcellularLocation>
</comment>
<comment type="domain">
    <text>The Gly-rich repeats may be important in the extracellular secretion of this metalloprotease.</text>
</comment>
<comment type="similarity">
    <text evidence="3">Belongs to the peptidase M10B family.</text>
</comment>
<dbReference type="EC" id="3.4.24.40"/>
<dbReference type="EMBL" id="J04736">
    <property type="protein sequence ID" value="AAA24861.1"/>
    <property type="molecule type" value="Genomic_DNA"/>
</dbReference>
<dbReference type="EMBL" id="M60395">
    <property type="protein sequence ID" value="AAA63637.1"/>
    <property type="molecule type" value="Genomic_DNA"/>
</dbReference>
<dbReference type="PIR" id="A33712">
    <property type="entry name" value="A33712"/>
</dbReference>
<dbReference type="SMR" id="P16316"/>
<dbReference type="MEROPS" id="M10.053"/>
<dbReference type="GO" id="GO:0031012">
    <property type="term" value="C:extracellular matrix"/>
    <property type="evidence" value="ECO:0007669"/>
    <property type="project" value="InterPro"/>
</dbReference>
<dbReference type="GO" id="GO:0005615">
    <property type="term" value="C:extracellular space"/>
    <property type="evidence" value="ECO:0007669"/>
    <property type="project" value="InterPro"/>
</dbReference>
<dbReference type="GO" id="GO:0005509">
    <property type="term" value="F:calcium ion binding"/>
    <property type="evidence" value="ECO:0007669"/>
    <property type="project" value="InterPro"/>
</dbReference>
<dbReference type="GO" id="GO:0004222">
    <property type="term" value="F:metalloendopeptidase activity"/>
    <property type="evidence" value="ECO:0007669"/>
    <property type="project" value="InterPro"/>
</dbReference>
<dbReference type="GO" id="GO:0008270">
    <property type="term" value="F:zinc ion binding"/>
    <property type="evidence" value="ECO:0007669"/>
    <property type="project" value="InterPro"/>
</dbReference>
<dbReference type="GO" id="GO:0006508">
    <property type="term" value="P:proteolysis"/>
    <property type="evidence" value="ECO:0007669"/>
    <property type="project" value="UniProtKB-KW"/>
</dbReference>
<dbReference type="CDD" id="cd04277">
    <property type="entry name" value="ZnMc_serralysin_like"/>
    <property type="match status" value="1"/>
</dbReference>
<dbReference type="Gene3D" id="3.40.390.10">
    <property type="entry name" value="Collagenase (Catalytic Domain)"/>
    <property type="match status" value="1"/>
</dbReference>
<dbReference type="Gene3D" id="2.150.10.10">
    <property type="entry name" value="Serralysin-like metalloprotease, C-terminal"/>
    <property type="match status" value="1"/>
</dbReference>
<dbReference type="InterPro" id="IPR018511">
    <property type="entry name" value="Hemolysin-typ_Ca-bd_CS"/>
</dbReference>
<dbReference type="InterPro" id="IPR001343">
    <property type="entry name" value="Hemolysn_Ca-bd"/>
</dbReference>
<dbReference type="InterPro" id="IPR024079">
    <property type="entry name" value="MetalloPept_cat_dom_sf"/>
</dbReference>
<dbReference type="InterPro" id="IPR001818">
    <property type="entry name" value="Pept_M10_metallopeptidase"/>
</dbReference>
<dbReference type="InterPro" id="IPR016294">
    <property type="entry name" value="Pept_M10B"/>
</dbReference>
<dbReference type="InterPro" id="IPR013858">
    <property type="entry name" value="Peptidase_M10B_C"/>
</dbReference>
<dbReference type="InterPro" id="IPR006026">
    <property type="entry name" value="Peptidase_Metallo"/>
</dbReference>
<dbReference type="InterPro" id="IPR034033">
    <property type="entry name" value="Serralysin-like"/>
</dbReference>
<dbReference type="InterPro" id="IPR011049">
    <property type="entry name" value="Serralysin-like_metalloprot_C"/>
</dbReference>
<dbReference type="NCBIfam" id="NF035945">
    <property type="entry name" value="Zn_serralysin"/>
    <property type="match status" value="1"/>
</dbReference>
<dbReference type="PANTHER" id="PTHR10201">
    <property type="entry name" value="MATRIX METALLOPROTEINASE"/>
    <property type="match status" value="1"/>
</dbReference>
<dbReference type="PANTHER" id="PTHR10201:SF323">
    <property type="entry name" value="MATRIX METALLOPROTEINASE-21"/>
    <property type="match status" value="1"/>
</dbReference>
<dbReference type="Pfam" id="PF00353">
    <property type="entry name" value="HemolysinCabind"/>
    <property type="match status" value="1"/>
</dbReference>
<dbReference type="Pfam" id="PF00413">
    <property type="entry name" value="Peptidase_M10"/>
    <property type="match status" value="1"/>
</dbReference>
<dbReference type="Pfam" id="PF08548">
    <property type="entry name" value="Peptidase_M10_C"/>
    <property type="match status" value="1"/>
</dbReference>
<dbReference type="PIRSF" id="PIRSF001205">
    <property type="entry name" value="Peptidase_M10B"/>
    <property type="match status" value="1"/>
</dbReference>
<dbReference type="PRINTS" id="PR00313">
    <property type="entry name" value="CABNDNGRPT"/>
</dbReference>
<dbReference type="SMART" id="SM00235">
    <property type="entry name" value="ZnMc"/>
    <property type="match status" value="1"/>
</dbReference>
<dbReference type="SUPFAM" id="SSF51120">
    <property type="entry name" value="beta-Roll"/>
    <property type="match status" value="1"/>
</dbReference>
<dbReference type="SUPFAM" id="SSF55486">
    <property type="entry name" value="Metalloproteases ('zincins'), catalytic domain"/>
    <property type="match status" value="1"/>
</dbReference>
<dbReference type="PROSITE" id="PS00330">
    <property type="entry name" value="HEMOLYSIN_CALCIUM"/>
    <property type="match status" value="1"/>
</dbReference>
<dbReference type="PROSITE" id="PS00142">
    <property type="entry name" value="ZINC_PROTEASE"/>
    <property type="match status" value="1"/>
</dbReference>
<gene>
    <name type="primary">prtB</name>
</gene>
<protein>
    <recommendedName>
        <fullName>Serralysin B</fullName>
        <ecNumber>3.4.24.40</ecNumber>
    </recommendedName>
    <alternativeName>
        <fullName>Secreted protease B</fullName>
        <shortName>ProB</shortName>
    </alternativeName>
</protein>
<reference key="1">
    <citation type="journal article" date="1989" name="J. Biol. Chem.">
        <title>Protease secretion by Erwinia chrysanthemi. Proteases B and C are synthesized and secreted as zymogens without a signal peptide.</title>
        <authorList>
            <person name="Delepelaire P."/>
            <person name="Wandersman C."/>
        </authorList>
    </citation>
    <scope>NUCLEOTIDE SEQUENCE [GENOMIC DNA]</scope>
    <scope>PARTIAL PROTEIN SEQUENCE</scope>
    <source>
        <strain>B374</strain>
    </source>
</reference>
<feature type="propeptide" id="PRO_0000028687">
    <location>
        <begin position="1"/>
        <end position="15"/>
    </location>
</feature>
<feature type="chain" id="PRO_0000028688" description="Serralysin B">
    <location>
        <begin position="16"/>
        <end position="481"/>
    </location>
</feature>
<feature type="repeat" description="Hemolysin-type calcium-binding 1">
    <location>
        <begin position="346"/>
        <end position="363"/>
    </location>
</feature>
<feature type="repeat" description="Hemolysin-type calcium-binding 2">
    <location>
        <begin position="364"/>
        <end position="381"/>
    </location>
</feature>
<feature type="repeat" description="Hemolysin-type calcium-binding 3">
    <location>
        <begin position="382"/>
        <end position="399"/>
    </location>
</feature>
<feature type="active site" evidence="2">
    <location>
        <position position="190"/>
    </location>
</feature>
<feature type="binding site" evidence="2">
    <location>
        <position position="189"/>
    </location>
    <ligand>
        <name>Zn(2+)</name>
        <dbReference type="ChEBI" id="CHEBI:29105"/>
        <note>catalytic</note>
    </ligand>
</feature>
<feature type="binding site" evidence="2">
    <location>
        <position position="193"/>
    </location>
    <ligand>
        <name>Zn(2+)</name>
        <dbReference type="ChEBI" id="CHEBI:29105"/>
        <note>catalytic</note>
    </ligand>
</feature>
<feature type="binding site" evidence="2">
    <location>
        <position position="230"/>
    </location>
    <ligand>
        <name>Zn(2+)</name>
        <dbReference type="ChEBI" id="CHEBI:29105"/>
        <note>catalytic</note>
    </ligand>
</feature>
<feature type="binding site" evidence="1">
    <location>
        <position position="267"/>
    </location>
    <ligand>
        <name>Ca(2+)</name>
        <dbReference type="ChEBI" id="CHEBI:29108"/>
        <label>1</label>
    </ligand>
</feature>
<feature type="binding site" evidence="1">
    <location>
        <position position="269"/>
    </location>
    <ligand>
        <name>Ca(2+)</name>
        <dbReference type="ChEBI" id="CHEBI:29108"/>
        <label>1</label>
    </ligand>
</feature>
<feature type="binding site" evidence="1">
    <location>
        <position position="271"/>
    </location>
    <ligand>
        <name>Ca(2+)</name>
        <dbReference type="ChEBI" id="CHEBI:29108"/>
        <label>1</label>
    </ligand>
</feature>
<feature type="binding site" evidence="1">
    <location>
        <position position="299"/>
    </location>
    <ligand>
        <name>Ca(2+)</name>
        <dbReference type="ChEBI" id="CHEBI:29108"/>
        <label>1</label>
    </ligand>
</feature>
<feature type="binding site" evidence="1">
    <location>
        <position position="301"/>
    </location>
    <ligand>
        <name>Ca(2+)</name>
        <dbReference type="ChEBI" id="CHEBI:29108"/>
        <label>1</label>
    </ligand>
</feature>
<feature type="binding site" evidence="1">
    <location>
        <position position="302"/>
    </location>
    <ligand>
        <name>Ca(2+)</name>
        <dbReference type="ChEBI" id="CHEBI:29108"/>
        <label>2</label>
    </ligand>
</feature>
<feature type="binding site" evidence="1">
    <location>
        <position position="304"/>
    </location>
    <ligand>
        <name>Ca(2+)</name>
        <dbReference type="ChEBI" id="CHEBI:29108"/>
        <label>1</label>
    </ligand>
</feature>
<feature type="binding site" evidence="1">
    <location>
        <position position="304"/>
    </location>
    <ligand>
        <name>Ca(2+)</name>
        <dbReference type="ChEBI" id="CHEBI:29108"/>
        <label>2</label>
    </ligand>
</feature>
<feature type="binding site" evidence="1">
    <location>
        <position position="341"/>
    </location>
    <ligand>
        <name>Ca(2+)</name>
        <dbReference type="ChEBI" id="CHEBI:29108"/>
        <label>2</label>
    </ligand>
</feature>
<feature type="binding site" evidence="1">
    <location>
        <position position="343"/>
    </location>
    <ligand>
        <name>Ca(2+)</name>
        <dbReference type="ChEBI" id="CHEBI:29108"/>
        <label>2</label>
    </ligand>
</feature>
<feature type="binding site" evidence="1">
    <location>
        <position position="348"/>
    </location>
    <ligand>
        <name>Ca(2+)</name>
        <dbReference type="ChEBI" id="CHEBI:29108"/>
        <label>3</label>
    </ligand>
</feature>
<feature type="binding site" evidence="1">
    <location>
        <position position="350"/>
    </location>
    <ligand>
        <name>Ca(2+)</name>
        <dbReference type="ChEBI" id="CHEBI:29108"/>
        <label>3</label>
    </ligand>
</feature>
<feature type="binding site" evidence="1">
    <location>
        <position position="352"/>
    </location>
    <ligand>
        <name>Ca(2+)</name>
        <dbReference type="ChEBI" id="CHEBI:29108"/>
        <label>3</label>
    </ligand>
</feature>
<feature type="binding site" evidence="1">
    <location>
        <position position="357"/>
    </location>
    <ligand>
        <name>Ca(2+)</name>
        <dbReference type="ChEBI" id="CHEBI:29108"/>
        <label>4</label>
    </ligand>
</feature>
<feature type="binding site" evidence="1">
    <location>
        <position position="359"/>
    </location>
    <ligand>
        <name>Ca(2+)</name>
        <dbReference type="ChEBI" id="CHEBI:29108"/>
        <label>4</label>
    </ligand>
</feature>
<feature type="binding site" evidence="1">
    <location>
        <position position="361"/>
    </location>
    <ligand>
        <name>Ca(2+)</name>
        <dbReference type="ChEBI" id="CHEBI:29108"/>
        <label>4</label>
    </ligand>
</feature>
<feature type="binding site" evidence="1">
    <location>
        <position position="365"/>
    </location>
    <ligand>
        <name>Ca(2+)</name>
        <dbReference type="ChEBI" id="CHEBI:29108"/>
        <label>3</label>
    </ligand>
</feature>
<feature type="binding site" evidence="1">
    <location>
        <position position="366"/>
    </location>
    <ligand>
        <name>Ca(2+)</name>
        <dbReference type="ChEBI" id="CHEBI:29108"/>
        <label>5</label>
    </ligand>
</feature>
<feature type="binding site" evidence="1">
    <location>
        <position position="367"/>
    </location>
    <ligand>
        <name>Ca(2+)</name>
        <dbReference type="ChEBI" id="CHEBI:29108"/>
        <label>3</label>
    </ligand>
</feature>
<feature type="binding site" evidence="1">
    <location>
        <position position="368"/>
    </location>
    <ligand>
        <name>Ca(2+)</name>
        <dbReference type="ChEBI" id="CHEBI:29108"/>
        <label>5</label>
    </ligand>
</feature>
<feature type="binding site" evidence="1">
    <location>
        <position position="370"/>
    </location>
    <ligand>
        <name>Ca(2+)</name>
        <dbReference type="ChEBI" id="CHEBI:29108"/>
        <label>3</label>
    </ligand>
</feature>
<feature type="binding site" evidence="1">
    <location>
        <position position="370"/>
    </location>
    <ligand>
        <name>Ca(2+)</name>
        <dbReference type="ChEBI" id="CHEBI:29108"/>
        <label>5</label>
    </ligand>
</feature>
<feature type="binding site" evidence="1">
    <location>
        <position position="374"/>
    </location>
    <ligand>
        <name>Ca(2+)</name>
        <dbReference type="ChEBI" id="CHEBI:29108"/>
        <label>4</label>
    </ligand>
</feature>
<feature type="binding site" evidence="1">
    <location>
        <position position="377"/>
    </location>
    <ligand>
        <name>Ca(2+)</name>
        <dbReference type="ChEBI" id="CHEBI:29108"/>
        <label>6</label>
    </ligand>
</feature>
<feature type="binding site" evidence="1">
    <location>
        <position position="379"/>
    </location>
    <ligand>
        <name>Ca(2+)</name>
        <dbReference type="ChEBI" id="CHEBI:29108"/>
        <label>4</label>
    </ligand>
</feature>
<feature type="binding site" evidence="1">
    <location>
        <position position="379"/>
    </location>
    <ligand>
        <name>Ca(2+)</name>
        <dbReference type="ChEBI" id="CHEBI:29108"/>
        <label>6</label>
    </ligand>
</feature>
<feature type="binding site" evidence="1">
    <location>
        <position position="383"/>
    </location>
    <ligand>
        <name>Ca(2+)</name>
        <dbReference type="ChEBI" id="CHEBI:29108"/>
        <label>5</label>
    </ligand>
</feature>
<feature type="binding site" evidence="1">
    <location>
        <position position="384"/>
    </location>
    <ligand>
        <name>Ca(2+)</name>
        <dbReference type="ChEBI" id="CHEBI:29108"/>
        <label>7</label>
    </ligand>
</feature>
<feature type="binding site" evidence="1">
    <location>
        <position position="385"/>
    </location>
    <ligand>
        <name>Ca(2+)</name>
        <dbReference type="ChEBI" id="CHEBI:29108"/>
        <label>5</label>
    </ligand>
</feature>
<feature type="binding site" evidence="1">
    <location>
        <position position="386"/>
    </location>
    <ligand>
        <name>Ca(2+)</name>
        <dbReference type="ChEBI" id="CHEBI:29108"/>
        <label>7</label>
    </ligand>
</feature>
<feature type="binding site" evidence="1">
    <location>
        <position position="388"/>
    </location>
    <ligand>
        <name>Ca(2+)</name>
        <dbReference type="ChEBI" id="CHEBI:29108"/>
        <label>5</label>
    </ligand>
</feature>
<feature type="binding site" evidence="1">
    <location>
        <position position="388"/>
    </location>
    <ligand>
        <name>Ca(2+)</name>
        <dbReference type="ChEBI" id="CHEBI:29108"/>
        <label>7</label>
    </ligand>
</feature>
<feature type="binding site" evidence="1">
    <location>
        <position position="397"/>
    </location>
    <ligand>
        <name>Ca(2+)</name>
        <dbReference type="ChEBI" id="CHEBI:29108"/>
        <label>6</label>
    </ligand>
</feature>
<feature type="binding site" evidence="1">
    <location>
        <position position="404"/>
    </location>
    <ligand>
        <name>Ca(2+)</name>
        <dbReference type="ChEBI" id="CHEBI:29108"/>
        <label>6</label>
    </ligand>
</feature>
<feature type="binding site" evidence="1">
    <location>
        <position position="414"/>
    </location>
    <ligand>
        <name>Ca(2+)</name>
        <dbReference type="ChEBI" id="CHEBI:29108"/>
        <label>7</label>
    </ligand>
</feature>
<evidence type="ECO:0000250" key="1"/>
<evidence type="ECO:0000255" key="2">
    <source>
        <dbReference type="PROSITE-ProRule" id="PRU10095"/>
    </source>
</evidence>
<evidence type="ECO:0000305" key="3"/>
<accession>P16316</accession>
<proteinExistence type="evidence at protein level"/>
<name>PRTB_DICCH</name>
<organism>
    <name type="scientific">Dickeya chrysanthemi</name>
    <name type="common">Pectobacterium chrysanthemi</name>
    <name type="synonym">Erwinia chrysanthemi</name>
    <dbReference type="NCBI Taxonomy" id="556"/>
    <lineage>
        <taxon>Bacteria</taxon>
        <taxon>Pseudomonadati</taxon>
        <taxon>Pseudomonadota</taxon>
        <taxon>Gammaproteobacteria</taxon>
        <taxon>Enterobacterales</taxon>
        <taxon>Pectobacteriaceae</taxon>
        <taxon>Dickeya</taxon>
    </lineage>
</organism>
<keyword id="KW-0106">Calcium</keyword>
<keyword id="KW-0903">Direct protein sequencing</keyword>
<keyword id="KW-0378">Hydrolase</keyword>
<keyword id="KW-0479">Metal-binding</keyword>
<keyword id="KW-0482">Metalloprotease</keyword>
<keyword id="KW-0645">Protease</keyword>
<keyword id="KW-0677">Repeat</keyword>
<keyword id="KW-0964">Secreted</keyword>
<keyword id="KW-0862">Zinc</keyword>
<keyword id="KW-0865">Zymogen</keyword>